<dbReference type="EC" id="4.2.1.59" evidence="1"/>
<dbReference type="EC" id="5.3.3.14" evidence="1"/>
<dbReference type="EMBL" id="CP000020">
    <property type="protein sequence ID" value="AAW85787.1"/>
    <property type="molecule type" value="Genomic_DNA"/>
</dbReference>
<dbReference type="RefSeq" id="WP_005419215.1">
    <property type="nucleotide sequence ID" value="NZ_CAWLES010000001.1"/>
</dbReference>
<dbReference type="RefSeq" id="YP_204675.1">
    <property type="nucleotide sequence ID" value="NC_006840.2"/>
</dbReference>
<dbReference type="SMR" id="Q5E5A9"/>
<dbReference type="STRING" id="312309.VF_1292"/>
<dbReference type="EnsemblBacteria" id="AAW85787">
    <property type="protein sequence ID" value="AAW85787"/>
    <property type="gene ID" value="VF_1292"/>
</dbReference>
<dbReference type="GeneID" id="54163964"/>
<dbReference type="KEGG" id="vfi:VF_1292"/>
<dbReference type="PATRIC" id="fig|312309.11.peg.1301"/>
<dbReference type="eggNOG" id="COG0764">
    <property type="taxonomic scope" value="Bacteria"/>
</dbReference>
<dbReference type="HOGENOM" id="CLU_097925_0_0_6"/>
<dbReference type="OrthoDB" id="9786735at2"/>
<dbReference type="UniPathway" id="UPA00094"/>
<dbReference type="Proteomes" id="UP000000537">
    <property type="component" value="Chromosome I"/>
</dbReference>
<dbReference type="GO" id="GO:0005737">
    <property type="term" value="C:cytoplasm"/>
    <property type="evidence" value="ECO:0007669"/>
    <property type="project" value="UniProtKB-SubCell"/>
</dbReference>
<dbReference type="GO" id="GO:0019171">
    <property type="term" value="F:(3R)-hydroxyacyl-[acyl-carrier-protein] dehydratase activity"/>
    <property type="evidence" value="ECO:0007669"/>
    <property type="project" value="UniProtKB-UniRule"/>
</dbReference>
<dbReference type="GO" id="GO:0034017">
    <property type="term" value="F:trans-2-decenoyl-acyl-carrier-protein isomerase activity"/>
    <property type="evidence" value="ECO:0007669"/>
    <property type="project" value="UniProtKB-UniRule"/>
</dbReference>
<dbReference type="GO" id="GO:0006636">
    <property type="term" value="P:unsaturated fatty acid biosynthetic process"/>
    <property type="evidence" value="ECO:0007669"/>
    <property type="project" value="UniProtKB-UniRule"/>
</dbReference>
<dbReference type="CDD" id="cd01287">
    <property type="entry name" value="FabA"/>
    <property type="match status" value="1"/>
</dbReference>
<dbReference type="FunFam" id="3.10.129.10:FF:000003">
    <property type="entry name" value="3-hydroxydecanoyl-[acyl-carrier-protein] dehydratase"/>
    <property type="match status" value="1"/>
</dbReference>
<dbReference type="Gene3D" id="3.10.129.10">
    <property type="entry name" value="Hotdog Thioesterase"/>
    <property type="match status" value="1"/>
</dbReference>
<dbReference type="HAMAP" id="MF_00405">
    <property type="entry name" value="FabA"/>
    <property type="match status" value="1"/>
</dbReference>
<dbReference type="InterPro" id="IPR010083">
    <property type="entry name" value="FabA"/>
</dbReference>
<dbReference type="InterPro" id="IPR013114">
    <property type="entry name" value="FabA_FabZ"/>
</dbReference>
<dbReference type="InterPro" id="IPR029069">
    <property type="entry name" value="HotDog_dom_sf"/>
</dbReference>
<dbReference type="NCBIfam" id="TIGR01749">
    <property type="entry name" value="fabA"/>
    <property type="match status" value="1"/>
</dbReference>
<dbReference type="NCBIfam" id="NF003509">
    <property type="entry name" value="PRK05174.1"/>
    <property type="match status" value="1"/>
</dbReference>
<dbReference type="PANTHER" id="PTHR30272">
    <property type="entry name" value="3-HYDROXYACYL-[ACYL-CARRIER-PROTEIN] DEHYDRATASE"/>
    <property type="match status" value="1"/>
</dbReference>
<dbReference type="PANTHER" id="PTHR30272:SF8">
    <property type="entry name" value="3-HYDROXYDECANOYL-[ACYL-CARRIER-PROTEIN] DEHYDRATASE"/>
    <property type="match status" value="1"/>
</dbReference>
<dbReference type="Pfam" id="PF07977">
    <property type="entry name" value="FabA"/>
    <property type="match status" value="1"/>
</dbReference>
<dbReference type="SUPFAM" id="SSF54637">
    <property type="entry name" value="Thioesterase/thiol ester dehydrase-isomerase"/>
    <property type="match status" value="1"/>
</dbReference>
<organism>
    <name type="scientific">Aliivibrio fischeri (strain ATCC 700601 / ES114)</name>
    <name type="common">Vibrio fischeri</name>
    <dbReference type="NCBI Taxonomy" id="312309"/>
    <lineage>
        <taxon>Bacteria</taxon>
        <taxon>Pseudomonadati</taxon>
        <taxon>Pseudomonadota</taxon>
        <taxon>Gammaproteobacteria</taxon>
        <taxon>Vibrionales</taxon>
        <taxon>Vibrionaceae</taxon>
        <taxon>Aliivibrio</taxon>
    </lineage>
</organism>
<gene>
    <name evidence="1" type="primary">fabA</name>
    <name type="ordered locus">VF_1292</name>
</gene>
<proteinExistence type="inferred from homology"/>
<feature type="chain" id="PRO_0000267759" description="3-hydroxydecanoyl-[acyl-carrier-protein] dehydratase">
    <location>
        <begin position="1"/>
        <end position="172"/>
    </location>
</feature>
<feature type="active site" evidence="1">
    <location>
        <position position="71"/>
    </location>
</feature>
<evidence type="ECO:0000255" key="1">
    <source>
        <dbReference type="HAMAP-Rule" id="MF_00405"/>
    </source>
</evidence>
<sequence length="172" mass="18859">MQNKPSSYDREDLLASSRGELFGPNGPQLPAPNMLMMDRIPLMSETEGAFGKGKVIAELDITPDLWFFDCHFPGDPVMPGCLGLDAMWQLVGFFLGWIGGEGKGRALGVGEVKFTGQVLPTAKKVTYEIDFKRVINRKLVMGLADGRVLVDGKEIYVAKDLKVGLFQDTSAF</sequence>
<keyword id="KW-0963">Cytoplasm</keyword>
<keyword id="KW-0275">Fatty acid biosynthesis</keyword>
<keyword id="KW-0276">Fatty acid metabolism</keyword>
<keyword id="KW-0413">Isomerase</keyword>
<keyword id="KW-0444">Lipid biosynthesis</keyword>
<keyword id="KW-0443">Lipid metabolism</keyword>
<keyword id="KW-0456">Lyase</keyword>
<keyword id="KW-1185">Reference proteome</keyword>
<accession>Q5E5A9</accession>
<comment type="function">
    <text evidence="1">Necessary for the introduction of cis unsaturation into fatty acids. Catalyzes the dehydration of (3R)-3-hydroxydecanoyl-ACP to E-(2)-decenoyl-ACP and then its isomerization to Z-(3)-decenoyl-ACP. Can catalyze the dehydratase reaction for beta-hydroxyacyl-ACPs with saturated chain lengths up to 16:0, being most active on intermediate chain length.</text>
</comment>
<comment type="catalytic activity">
    <reaction evidence="1">
        <text>a (3R)-hydroxyacyl-[ACP] = a (2E)-enoyl-[ACP] + H2O</text>
        <dbReference type="Rhea" id="RHEA:13097"/>
        <dbReference type="Rhea" id="RHEA-COMP:9925"/>
        <dbReference type="Rhea" id="RHEA-COMP:9945"/>
        <dbReference type="ChEBI" id="CHEBI:15377"/>
        <dbReference type="ChEBI" id="CHEBI:78784"/>
        <dbReference type="ChEBI" id="CHEBI:78827"/>
        <dbReference type="EC" id="4.2.1.59"/>
    </reaction>
</comment>
<comment type="catalytic activity">
    <reaction evidence="1">
        <text>(3R)-hydroxydecanoyl-[ACP] = (2E)-decenoyl-[ACP] + H2O</text>
        <dbReference type="Rhea" id="RHEA:41860"/>
        <dbReference type="Rhea" id="RHEA-COMP:9638"/>
        <dbReference type="Rhea" id="RHEA-COMP:9639"/>
        <dbReference type="ChEBI" id="CHEBI:15377"/>
        <dbReference type="ChEBI" id="CHEBI:78466"/>
        <dbReference type="ChEBI" id="CHEBI:78467"/>
    </reaction>
</comment>
<comment type="catalytic activity">
    <reaction evidence="1">
        <text>(2E)-decenoyl-[ACP] = (3Z)-decenoyl-[ACP]</text>
        <dbReference type="Rhea" id="RHEA:23568"/>
        <dbReference type="Rhea" id="RHEA-COMP:9639"/>
        <dbReference type="Rhea" id="RHEA-COMP:9927"/>
        <dbReference type="ChEBI" id="CHEBI:78467"/>
        <dbReference type="ChEBI" id="CHEBI:78798"/>
        <dbReference type="EC" id="5.3.3.14"/>
    </reaction>
</comment>
<comment type="pathway">
    <text evidence="1">Lipid metabolism; fatty acid biosynthesis.</text>
</comment>
<comment type="subunit">
    <text evidence="1">Homodimer.</text>
</comment>
<comment type="subcellular location">
    <subcellularLocation>
        <location evidence="1">Cytoplasm</location>
    </subcellularLocation>
</comment>
<comment type="similarity">
    <text evidence="1">Belongs to the thioester dehydratase family. FabA subfamily.</text>
</comment>
<name>FABA_ALIF1</name>
<protein>
    <recommendedName>
        <fullName evidence="1">3-hydroxydecanoyl-[acyl-carrier-protein] dehydratase</fullName>
        <ecNumber evidence="1">4.2.1.59</ecNumber>
    </recommendedName>
    <alternativeName>
        <fullName evidence="1">3-hydroxyacyl-[acyl-carrier-protein] dehydratase FabA</fullName>
    </alternativeName>
    <alternativeName>
        <fullName evidence="1">Beta-hydroxydecanoyl thioester dehydrase</fullName>
    </alternativeName>
    <alternativeName>
        <fullName evidence="1">Trans-2-decenoyl-[acyl-carrier-protein] isomerase</fullName>
        <ecNumber evidence="1">5.3.3.14</ecNumber>
    </alternativeName>
</protein>
<reference key="1">
    <citation type="journal article" date="2005" name="Proc. Natl. Acad. Sci. U.S.A.">
        <title>Complete genome sequence of Vibrio fischeri: a symbiotic bacterium with pathogenic congeners.</title>
        <authorList>
            <person name="Ruby E.G."/>
            <person name="Urbanowski M."/>
            <person name="Campbell J."/>
            <person name="Dunn A."/>
            <person name="Faini M."/>
            <person name="Gunsalus R."/>
            <person name="Lostroh P."/>
            <person name="Lupp C."/>
            <person name="McCann J."/>
            <person name="Millikan D."/>
            <person name="Schaefer A."/>
            <person name="Stabb E."/>
            <person name="Stevens A."/>
            <person name="Visick K."/>
            <person name="Whistler C."/>
            <person name="Greenberg E.P."/>
        </authorList>
    </citation>
    <scope>NUCLEOTIDE SEQUENCE [LARGE SCALE GENOMIC DNA]</scope>
    <source>
        <strain>ATCC 700601 / ES114</strain>
    </source>
</reference>